<name>RLMC_SHISS</name>
<keyword id="KW-0004">4Fe-4S</keyword>
<keyword id="KW-0408">Iron</keyword>
<keyword id="KW-0411">Iron-sulfur</keyword>
<keyword id="KW-0479">Metal-binding</keyword>
<keyword id="KW-0489">Methyltransferase</keyword>
<keyword id="KW-1185">Reference proteome</keyword>
<keyword id="KW-0698">rRNA processing</keyword>
<keyword id="KW-0949">S-adenosyl-L-methionine</keyword>
<keyword id="KW-0808">Transferase</keyword>
<proteinExistence type="inferred from homology"/>
<comment type="function">
    <text evidence="1">Catalyzes the formation of 5-methyl-uridine at position 747 (m5U747) in 23S rRNA.</text>
</comment>
<comment type="catalytic activity">
    <reaction evidence="1">
        <text>uridine(747) in 23S rRNA + S-adenosyl-L-methionine = 5-methyluridine(747) in 23S rRNA + S-adenosyl-L-homocysteine + H(+)</text>
        <dbReference type="Rhea" id="RHEA:42628"/>
        <dbReference type="Rhea" id="RHEA-COMP:10154"/>
        <dbReference type="Rhea" id="RHEA-COMP:10155"/>
        <dbReference type="ChEBI" id="CHEBI:15378"/>
        <dbReference type="ChEBI" id="CHEBI:57856"/>
        <dbReference type="ChEBI" id="CHEBI:59789"/>
        <dbReference type="ChEBI" id="CHEBI:65315"/>
        <dbReference type="ChEBI" id="CHEBI:74447"/>
        <dbReference type="EC" id="2.1.1.189"/>
    </reaction>
</comment>
<comment type="similarity">
    <text evidence="1">Belongs to the class I-like SAM-binding methyltransferase superfamily. RNA M5U methyltransferase family. RlmC subfamily.</text>
</comment>
<feature type="chain" id="PRO_0000282021" description="23S rRNA (uracil(747)-C(5))-methyltransferase RlmC">
    <location>
        <begin position="1"/>
        <end position="375"/>
    </location>
</feature>
<feature type="active site" description="Nucleophile" evidence="1">
    <location>
        <position position="334"/>
    </location>
</feature>
<feature type="binding site" evidence="1">
    <location>
        <position position="3"/>
    </location>
    <ligand>
        <name>[4Fe-4S] cluster</name>
        <dbReference type="ChEBI" id="CHEBI:49883"/>
    </ligand>
</feature>
<feature type="binding site" evidence="1">
    <location>
        <position position="11"/>
    </location>
    <ligand>
        <name>[4Fe-4S] cluster</name>
        <dbReference type="ChEBI" id="CHEBI:49883"/>
    </ligand>
</feature>
<feature type="binding site" evidence="1">
    <location>
        <position position="14"/>
    </location>
    <ligand>
        <name>[4Fe-4S] cluster</name>
        <dbReference type="ChEBI" id="CHEBI:49883"/>
    </ligand>
</feature>
<feature type="binding site" evidence="1">
    <location>
        <position position="87"/>
    </location>
    <ligand>
        <name>[4Fe-4S] cluster</name>
        <dbReference type="ChEBI" id="CHEBI:49883"/>
    </ligand>
</feature>
<feature type="binding site" evidence="1">
    <location>
        <position position="212"/>
    </location>
    <ligand>
        <name>S-adenosyl-L-methionine</name>
        <dbReference type="ChEBI" id="CHEBI:59789"/>
    </ligand>
</feature>
<feature type="binding site" evidence="1">
    <location>
        <position position="241"/>
    </location>
    <ligand>
        <name>S-adenosyl-L-methionine</name>
        <dbReference type="ChEBI" id="CHEBI:59789"/>
    </ligand>
</feature>
<feature type="binding site" evidence="1">
    <location>
        <position position="262"/>
    </location>
    <ligand>
        <name>S-adenosyl-L-methionine</name>
        <dbReference type="ChEBI" id="CHEBI:59789"/>
    </ligand>
</feature>
<feature type="binding site" evidence="1">
    <location>
        <position position="307"/>
    </location>
    <ligand>
        <name>S-adenosyl-L-methionine</name>
        <dbReference type="ChEBI" id="CHEBI:59789"/>
    </ligand>
</feature>
<protein>
    <recommendedName>
        <fullName evidence="1">23S rRNA (uracil(747)-C(5))-methyltransferase RlmC</fullName>
        <ecNumber evidence="1">2.1.1.189</ecNumber>
    </recommendedName>
    <alternativeName>
        <fullName evidence="1">23S rRNA(m5U747)-methyltransferase</fullName>
    </alternativeName>
</protein>
<sequence length="375" mass="41965">MQCALYDAGRCRSCQWITQPIPEQLSAKTADLKNLLADFPVEEWCAPVSGPEQGFRNKAKMVVSGSVEKPLLGMLHRDGTPEDLCDCPLYPASFAPVFAALKPFIARAGLTPYNVARKRGELKYILLTESQSDGGMMLRFVLRSETKLAQLRKALPWLQEQLPQLKVITVNIQPVHMAIMEGETEIYLTEQQALAERFNDVPLWIRPQSFFQTNPAVASQLYATARDWVRQLPVKHMWDLFCGVGGFGLHCATPDMQLTGIEIASEAIACAKQSAAELGLTRLQFQALDSTQFATAQGDVPELVLVNPPRRGIGKPLCDYLSTMAPRFIIYSSCNAQTMAKDIRELPGYRIERVQLFDMFPHTAHYEVMTLLVKQ</sequence>
<reference key="1">
    <citation type="journal article" date="2005" name="Nucleic Acids Res.">
        <title>Genome dynamics and diversity of Shigella species, the etiologic agents of bacillary dysentery.</title>
        <authorList>
            <person name="Yang F."/>
            <person name="Yang J."/>
            <person name="Zhang X."/>
            <person name="Chen L."/>
            <person name="Jiang Y."/>
            <person name="Yan Y."/>
            <person name="Tang X."/>
            <person name="Wang J."/>
            <person name="Xiong Z."/>
            <person name="Dong J."/>
            <person name="Xue Y."/>
            <person name="Zhu Y."/>
            <person name="Xu X."/>
            <person name="Sun L."/>
            <person name="Chen S."/>
            <person name="Nie H."/>
            <person name="Peng J."/>
            <person name="Xu J."/>
            <person name="Wang Y."/>
            <person name="Yuan Z."/>
            <person name="Wen Y."/>
            <person name="Yao Z."/>
            <person name="Shen Y."/>
            <person name="Qiang B."/>
            <person name="Hou Y."/>
            <person name="Yu J."/>
            <person name="Jin Q."/>
        </authorList>
    </citation>
    <scope>NUCLEOTIDE SEQUENCE [LARGE SCALE GENOMIC DNA]</scope>
    <source>
        <strain>Ss046</strain>
    </source>
</reference>
<accession>Q3Z3S5</accession>
<gene>
    <name evidence="1" type="primary">rlmC</name>
    <name type="synonym">rumB</name>
    <name type="ordered locus">SSON_0844</name>
</gene>
<evidence type="ECO:0000255" key="1">
    <source>
        <dbReference type="HAMAP-Rule" id="MF_01012"/>
    </source>
</evidence>
<dbReference type="EC" id="2.1.1.189" evidence="1"/>
<dbReference type="EMBL" id="CP000038">
    <property type="protein sequence ID" value="AAZ87587.1"/>
    <property type="molecule type" value="Genomic_DNA"/>
</dbReference>
<dbReference type="RefSeq" id="WP_001149730.1">
    <property type="nucleotide sequence ID" value="NC_007384.1"/>
</dbReference>
<dbReference type="SMR" id="Q3Z3S5"/>
<dbReference type="GeneID" id="93776563"/>
<dbReference type="KEGG" id="ssn:SSON_0844"/>
<dbReference type="HOGENOM" id="CLU_014689_0_0_6"/>
<dbReference type="Proteomes" id="UP000002529">
    <property type="component" value="Chromosome"/>
</dbReference>
<dbReference type="GO" id="GO:0051539">
    <property type="term" value="F:4 iron, 4 sulfur cluster binding"/>
    <property type="evidence" value="ECO:0007669"/>
    <property type="project" value="UniProtKB-KW"/>
</dbReference>
<dbReference type="GO" id="GO:0005506">
    <property type="term" value="F:iron ion binding"/>
    <property type="evidence" value="ECO:0007669"/>
    <property type="project" value="UniProtKB-UniRule"/>
</dbReference>
<dbReference type="GO" id="GO:0070041">
    <property type="term" value="F:rRNA (uridine-C5-)-methyltransferase activity"/>
    <property type="evidence" value="ECO:0007669"/>
    <property type="project" value="UniProtKB-UniRule"/>
</dbReference>
<dbReference type="GO" id="GO:0070475">
    <property type="term" value="P:rRNA base methylation"/>
    <property type="evidence" value="ECO:0007669"/>
    <property type="project" value="TreeGrafter"/>
</dbReference>
<dbReference type="CDD" id="cd02440">
    <property type="entry name" value="AdoMet_MTases"/>
    <property type="match status" value="1"/>
</dbReference>
<dbReference type="FunFam" id="2.40.50.1070:FF:000002">
    <property type="entry name" value="23S rRNA (uracil(747)-C(5))-methyltransferase RlmC"/>
    <property type="match status" value="1"/>
</dbReference>
<dbReference type="FunFam" id="3.40.50.150:FF:000049">
    <property type="entry name" value="23S rRNA (uracil(747)-C(5))-methyltransferase RlmC"/>
    <property type="match status" value="1"/>
</dbReference>
<dbReference type="Gene3D" id="2.40.50.1070">
    <property type="match status" value="1"/>
</dbReference>
<dbReference type="Gene3D" id="3.40.50.150">
    <property type="entry name" value="Vaccinia Virus protein VP39"/>
    <property type="match status" value="1"/>
</dbReference>
<dbReference type="HAMAP" id="MF_01012">
    <property type="entry name" value="23SrRNA_methyltr_RlmC"/>
    <property type="match status" value="1"/>
</dbReference>
<dbReference type="InterPro" id="IPR011825">
    <property type="entry name" value="23SrRNA_MeTrfase_RlmC"/>
</dbReference>
<dbReference type="InterPro" id="IPR030390">
    <property type="entry name" value="MeTrfase_TrmA_AS"/>
</dbReference>
<dbReference type="InterPro" id="IPR030391">
    <property type="entry name" value="MeTrfase_TrmA_CS"/>
</dbReference>
<dbReference type="InterPro" id="IPR029063">
    <property type="entry name" value="SAM-dependent_MTases_sf"/>
</dbReference>
<dbReference type="InterPro" id="IPR010280">
    <property type="entry name" value="U5_MeTrfase_fam"/>
</dbReference>
<dbReference type="NCBIfam" id="TIGR02085">
    <property type="entry name" value="meth_trns_rumB"/>
    <property type="match status" value="1"/>
</dbReference>
<dbReference type="PANTHER" id="PTHR11061">
    <property type="entry name" value="RNA M5U METHYLTRANSFERASE"/>
    <property type="match status" value="1"/>
</dbReference>
<dbReference type="PANTHER" id="PTHR11061:SF30">
    <property type="entry name" value="TRNA (URACIL(54)-C(5))-METHYLTRANSFERASE"/>
    <property type="match status" value="1"/>
</dbReference>
<dbReference type="Pfam" id="PF05958">
    <property type="entry name" value="tRNA_U5-meth_tr"/>
    <property type="match status" value="1"/>
</dbReference>
<dbReference type="SUPFAM" id="SSF53335">
    <property type="entry name" value="S-adenosyl-L-methionine-dependent methyltransferases"/>
    <property type="match status" value="1"/>
</dbReference>
<dbReference type="PROSITE" id="PS51687">
    <property type="entry name" value="SAM_MT_RNA_M5U"/>
    <property type="match status" value="1"/>
</dbReference>
<dbReference type="PROSITE" id="PS01230">
    <property type="entry name" value="TRMA_1"/>
    <property type="match status" value="1"/>
</dbReference>
<dbReference type="PROSITE" id="PS01231">
    <property type="entry name" value="TRMA_2"/>
    <property type="match status" value="1"/>
</dbReference>
<organism>
    <name type="scientific">Shigella sonnei (strain Ss046)</name>
    <dbReference type="NCBI Taxonomy" id="300269"/>
    <lineage>
        <taxon>Bacteria</taxon>
        <taxon>Pseudomonadati</taxon>
        <taxon>Pseudomonadota</taxon>
        <taxon>Gammaproteobacteria</taxon>
        <taxon>Enterobacterales</taxon>
        <taxon>Enterobacteriaceae</taxon>
        <taxon>Shigella</taxon>
    </lineage>
</organism>